<protein>
    <recommendedName>
        <fullName evidence="1">ATP-dependent Clp protease adapter protein ClpS</fullName>
    </recommendedName>
</protein>
<organism>
    <name type="scientific">Desulfatibacillum aliphaticivorans</name>
    <dbReference type="NCBI Taxonomy" id="218208"/>
    <lineage>
        <taxon>Bacteria</taxon>
        <taxon>Pseudomonadati</taxon>
        <taxon>Thermodesulfobacteriota</taxon>
        <taxon>Desulfobacteria</taxon>
        <taxon>Desulfobacterales</taxon>
        <taxon>Desulfatibacillaceae</taxon>
        <taxon>Desulfatibacillum</taxon>
    </lineage>
</organism>
<accession>B8FGA3</accession>
<comment type="function">
    <text evidence="1">Involved in the modulation of the specificity of the ClpAP-mediated ATP-dependent protein degradation.</text>
</comment>
<comment type="subunit">
    <text evidence="1">Binds to the N-terminal domain of the chaperone ClpA.</text>
</comment>
<comment type="similarity">
    <text evidence="1">Belongs to the ClpS family.</text>
</comment>
<evidence type="ECO:0000255" key="1">
    <source>
        <dbReference type="HAMAP-Rule" id="MF_00302"/>
    </source>
</evidence>
<evidence type="ECO:0000256" key="2">
    <source>
        <dbReference type="SAM" id="MobiDB-lite"/>
    </source>
</evidence>
<feature type="chain" id="PRO_1000204970" description="ATP-dependent Clp protease adapter protein ClpS">
    <location>
        <begin position="1"/>
        <end position="104"/>
    </location>
</feature>
<feature type="region of interest" description="Disordered" evidence="2">
    <location>
        <begin position="1"/>
        <end position="20"/>
    </location>
</feature>
<sequence>MSPDPHEDLGDVLTEPTQKTERPRMFKVLLHNDDYTTMEFVVGVLQRVFNKSVPEATRIMLNVHNRGVGVAGVYTAEVAETKIETVHSMAQADGFPLKCSMEPE</sequence>
<gene>
    <name evidence="1" type="primary">clpS</name>
    <name type="ordered locus">Dalk_2089</name>
</gene>
<name>CLPS_DESAL</name>
<reference key="1">
    <citation type="journal article" date="2012" name="Environ. Microbiol.">
        <title>The genome sequence of Desulfatibacillum alkenivorans AK-01: a blueprint for anaerobic alkane oxidation.</title>
        <authorList>
            <person name="Callaghan A.V."/>
            <person name="Morris B.E."/>
            <person name="Pereira I.A."/>
            <person name="McInerney M.J."/>
            <person name="Austin R.N."/>
            <person name="Groves J.T."/>
            <person name="Kukor J.J."/>
            <person name="Suflita J.M."/>
            <person name="Young L.Y."/>
            <person name="Zylstra G.J."/>
            <person name="Wawrik B."/>
        </authorList>
    </citation>
    <scope>NUCLEOTIDE SEQUENCE [LARGE SCALE GENOMIC DNA]</scope>
    <source>
        <strain>AK-01</strain>
    </source>
</reference>
<keyword id="KW-1185">Reference proteome</keyword>
<dbReference type="EMBL" id="CP001322">
    <property type="protein sequence ID" value="ACL03783.1"/>
    <property type="molecule type" value="Genomic_DNA"/>
</dbReference>
<dbReference type="RefSeq" id="WP_015946860.1">
    <property type="nucleotide sequence ID" value="NC_011768.1"/>
</dbReference>
<dbReference type="SMR" id="B8FGA3"/>
<dbReference type="KEGG" id="dal:Dalk_2089"/>
<dbReference type="eggNOG" id="COG2127">
    <property type="taxonomic scope" value="Bacteria"/>
</dbReference>
<dbReference type="HOGENOM" id="CLU_134358_1_0_7"/>
<dbReference type="Proteomes" id="UP000000739">
    <property type="component" value="Chromosome"/>
</dbReference>
<dbReference type="GO" id="GO:0030163">
    <property type="term" value="P:protein catabolic process"/>
    <property type="evidence" value="ECO:0007669"/>
    <property type="project" value="InterPro"/>
</dbReference>
<dbReference type="GO" id="GO:0006508">
    <property type="term" value="P:proteolysis"/>
    <property type="evidence" value="ECO:0007669"/>
    <property type="project" value="UniProtKB-UniRule"/>
</dbReference>
<dbReference type="FunFam" id="3.30.1390.10:FF:000002">
    <property type="entry name" value="ATP-dependent Clp protease adapter protein ClpS"/>
    <property type="match status" value="1"/>
</dbReference>
<dbReference type="Gene3D" id="3.30.1390.10">
    <property type="match status" value="1"/>
</dbReference>
<dbReference type="HAMAP" id="MF_00302">
    <property type="entry name" value="ClpS"/>
    <property type="match status" value="1"/>
</dbReference>
<dbReference type="InterPro" id="IPR022935">
    <property type="entry name" value="ClpS"/>
</dbReference>
<dbReference type="InterPro" id="IPR003769">
    <property type="entry name" value="ClpS_core"/>
</dbReference>
<dbReference type="InterPro" id="IPR014719">
    <property type="entry name" value="Ribosomal_bL12_C/ClpS-like"/>
</dbReference>
<dbReference type="NCBIfam" id="NF000672">
    <property type="entry name" value="PRK00033.1-5"/>
    <property type="match status" value="1"/>
</dbReference>
<dbReference type="PANTHER" id="PTHR33473:SF19">
    <property type="entry name" value="ATP-DEPENDENT CLP PROTEASE ADAPTER PROTEIN CLPS"/>
    <property type="match status" value="1"/>
</dbReference>
<dbReference type="PANTHER" id="PTHR33473">
    <property type="entry name" value="ATP-DEPENDENT CLP PROTEASE ADAPTER PROTEIN CLPS1, CHLOROPLASTIC"/>
    <property type="match status" value="1"/>
</dbReference>
<dbReference type="Pfam" id="PF02617">
    <property type="entry name" value="ClpS"/>
    <property type="match status" value="1"/>
</dbReference>
<dbReference type="SUPFAM" id="SSF54736">
    <property type="entry name" value="ClpS-like"/>
    <property type="match status" value="1"/>
</dbReference>
<proteinExistence type="inferred from homology"/>